<organism>
    <name type="scientific">Enterococcus faecium</name>
    <name type="common">Streptococcus faecium</name>
    <dbReference type="NCBI Taxonomy" id="1352"/>
    <lineage>
        <taxon>Bacteria</taxon>
        <taxon>Bacillati</taxon>
        <taxon>Bacillota</taxon>
        <taxon>Bacilli</taxon>
        <taxon>Lactobacillales</taxon>
        <taxon>Enterococcaceae</taxon>
        <taxon>Enterococcus</taxon>
    </lineage>
</organism>
<keyword id="KW-0067">ATP-binding</keyword>
<keyword id="KW-0963">Cytoplasm</keyword>
<keyword id="KW-0227">DNA damage</keyword>
<keyword id="KW-0233">DNA recombination</keyword>
<keyword id="KW-0234">DNA repair</keyword>
<keyword id="KW-0238">DNA-binding</keyword>
<keyword id="KW-0547">Nucleotide-binding</keyword>
<keyword id="KW-0742">SOS response</keyword>
<comment type="function">
    <text evidence="1">Can catalyze the hydrolysis of ATP in the presence of single-stranded DNA, the ATP-dependent uptake of single-stranded DNA by duplex DNA, and the ATP-dependent hybridization of homologous single-stranded DNAs. It interacts with LexA causing its activation and leading to its autocatalytic cleavage.</text>
</comment>
<comment type="subcellular location">
    <subcellularLocation>
        <location evidence="1">Cytoplasm</location>
    </subcellularLocation>
</comment>
<comment type="similarity">
    <text evidence="1">Belongs to the RecA family.</text>
</comment>
<proteinExistence type="inferred from homology"/>
<sequence>MADDRKAALDAALKKIEKSYGKGSIMKLGEKIDQQISTIPSGSLALDVALGVGGYPRGRIIEVYGPESSGKTTVALHAIAEVQKNGGTAAFIDAEHALDPQYAQKLGVNIDELLLSQPDTGEQGLEIADALVSSGAVDIVVVDSVAALVPRAEIDGEMGDSHVGLQARLMSQALRKLSGSINKTKTIAIFINQIREKVGVMFGNPEITPGGRALKFYATIRLEVRRAEQLKQGTDIVGNRTKIKVVKNKVAPPFKIAEVDVMYGLGISQEGELLDMAVEKDIVDKSGAWYSYKEDRIGQGRENAKIYMANHPEMMAEVSALVRAAYGIGEEVAVPEDEKGQEELPLVEE</sequence>
<accession>Q6KCJ6</accession>
<gene>
    <name evidence="1" type="primary">recA</name>
</gene>
<evidence type="ECO:0000255" key="1">
    <source>
        <dbReference type="HAMAP-Rule" id="MF_00268"/>
    </source>
</evidence>
<feature type="chain" id="PRO_0000122710" description="Protein RecA">
    <location>
        <begin position="1"/>
        <end position="349"/>
    </location>
</feature>
<feature type="binding site" evidence="1">
    <location>
        <begin position="65"/>
        <end position="72"/>
    </location>
    <ligand>
        <name>ATP</name>
        <dbReference type="ChEBI" id="CHEBI:30616"/>
    </ligand>
</feature>
<dbReference type="EMBL" id="AJ621707">
    <property type="protein sequence ID" value="CAF21832.1"/>
    <property type="molecule type" value="Genomic_DNA"/>
</dbReference>
<dbReference type="RefSeq" id="WP_002287328.1">
    <property type="nucleotide sequence ID" value="NZ_WVTH01000006.1"/>
</dbReference>
<dbReference type="SMR" id="Q6KCJ6"/>
<dbReference type="STRING" id="1352.AL014_13320"/>
<dbReference type="GeneID" id="66455535"/>
<dbReference type="eggNOG" id="COG0468">
    <property type="taxonomic scope" value="Bacteria"/>
</dbReference>
<dbReference type="OMA" id="DSKMGLH"/>
<dbReference type="GO" id="GO:0005829">
    <property type="term" value="C:cytosol"/>
    <property type="evidence" value="ECO:0007669"/>
    <property type="project" value="TreeGrafter"/>
</dbReference>
<dbReference type="GO" id="GO:0005524">
    <property type="term" value="F:ATP binding"/>
    <property type="evidence" value="ECO:0007669"/>
    <property type="project" value="UniProtKB-UniRule"/>
</dbReference>
<dbReference type="GO" id="GO:0016887">
    <property type="term" value="F:ATP hydrolysis activity"/>
    <property type="evidence" value="ECO:0007669"/>
    <property type="project" value="InterPro"/>
</dbReference>
<dbReference type="GO" id="GO:0140664">
    <property type="term" value="F:ATP-dependent DNA damage sensor activity"/>
    <property type="evidence" value="ECO:0007669"/>
    <property type="project" value="InterPro"/>
</dbReference>
<dbReference type="GO" id="GO:0003684">
    <property type="term" value="F:damaged DNA binding"/>
    <property type="evidence" value="ECO:0007669"/>
    <property type="project" value="UniProtKB-UniRule"/>
</dbReference>
<dbReference type="GO" id="GO:0003697">
    <property type="term" value="F:single-stranded DNA binding"/>
    <property type="evidence" value="ECO:0007669"/>
    <property type="project" value="UniProtKB-UniRule"/>
</dbReference>
<dbReference type="GO" id="GO:0006310">
    <property type="term" value="P:DNA recombination"/>
    <property type="evidence" value="ECO:0007669"/>
    <property type="project" value="UniProtKB-UniRule"/>
</dbReference>
<dbReference type="GO" id="GO:0006281">
    <property type="term" value="P:DNA repair"/>
    <property type="evidence" value="ECO:0007669"/>
    <property type="project" value="UniProtKB-UniRule"/>
</dbReference>
<dbReference type="GO" id="GO:0009432">
    <property type="term" value="P:SOS response"/>
    <property type="evidence" value="ECO:0007669"/>
    <property type="project" value="UniProtKB-UniRule"/>
</dbReference>
<dbReference type="CDD" id="cd00983">
    <property type="entry name" value="RecA"/>
    <property type="match status" value="1"/>
</dbReference>
<dbReference type="FunFam" id="3.40.50.300:FF:000087">
    <property type="entry name" value="Recombinase RecA"/>
    <property type="match status" value="1"/>
</dbReference>
<dbReference type="Gene3D" id="3.40.50.300">
    <property type="entry name" value="P-loop containing nucleotide triphosphate hydrolases"/>
    <property type="match status" value="1"/>
</dbReference>
<dbReference type="HAMAP" id="MF_00268">
    <property type="entry name" value="RecA"/>
    <property type="match status" value="1"/>
</dbReference>
<dbReference type="InterPro" id="IPR003593">
    <property type="entry name" value="AAA+_ATPase"/>
</dbReference>
<dbReference type="InterPro" id="IPR013765">
    <property type="entry name" value="DNA_recomb/repair_RecA"/>
</dbReference>
<dbReference type="InterPro" id="IPR020584">
    <property type="entry name" value="DNA_recomb/repair_RecA_CS"/>
</dbReference>
<dbReference type="InterPro" id="IPR027417">
    <property type="entry name" value="P-loop_NTPase"/>
</dbReference>
<dbReference type="InterPro" id="IPR049261">
    <property type="entry name" value="RecA-like_C"/>
</dbReference>
<dbReference type="InterPro" id="IPR049428">
    <property type="entry name" value="RecA-like_N"/>
</dbReference>
<dbReference type="InterPro" id="IPR020588">
    <property type="entry name" value="RecA_ATP-bd"/>
</dbReference>
<dbReference type="InterPro" id="IPR023400">
    <property type="entry name" value="RecA_C_sf"/>
</dbReference>
<dbReference type="InterPro" id="IPR020587">
    <property type="entry name" value="RecA_monomer-monomer_interface"/>
</dbReference>
<dbReference type="NCBIfam" id="TIGR02012">
    <property type="entry name" value="tigrfam_recA"/>
    <property type="match status" value="1"/>
</dbReference>
<dbReference type="PANTHER" id="PTHR45900:SF1">
    <property type="entry name" value="MITOCHONDRIAL DNA REPAIR PROTEIN RECA HOMOLOG-RELATED"/>
    <property type="match status" value="1"/>
</dbReference>
<dbReference type="PANTHER" id="PTHR45900">
    <property type="entry name" value="RECA"/>
    <property type="match status" value="1"/>
</dbReference>
<dbReference type="Pfam" id="PF00154">
    <property type="entry name" value="RecA"/>
    <property type="match status" value="1"/>
</dbReference>
<dbReference type="Pfam" id="PF21096">
    <property type="entry name" value="RecA_C"/>
    <property type="match status" value="1"/>
</dbReference>
<dbReference type="PRINTS" id="PR00142">
    <property type="entry name" value="RECA"/>
</dbReference>
<dbReference type="SMART" id="SM00382">
    <property type="entry name" value="AAA"/>
    <property type="match status" value="1"/>
</dbReference>
<dbReference type="SUPFAM" id="SSF52540">
    <property type="entry name" value="P-loop containing nucleoside triphosphate hydrolases"/>
    <property type="match status" value="1"/>
</dbReference>
<dbReference type="SUPFAM" id="SSF54752">
    <property type="entry name" value="RecA protein, C-terminal domain"/>
    <property type="match status" value="1"/>
</dbReference>
<dbReference type="PROSITE" id="PS00321">
    <property type="entry name" value="RECA_1"/>
    <property type="match status" value="1"/>
</dbReference>
<dbReference type="PROSITE" id="PS50162">
    <property type="entry name" value="RECA_2"/>
    <property type="match status" value="1"/>
</dbReference>
<dbReference type="PROSITE" id="PS50163">
    <property type="entry name" value="RECA_3"/>
    <property type="match status" value="1"/>
</dbReference>
<name>RECA_ENTFC</name>
<reference key="1">
    <citation type="submission" date="2004-01" db="EMBL/GenBank/DDBJ databases">
        <title>Taxonomic re-evaluation of the genus Enterococcus.</title>
        <authorList>
            <person name="Torriani S."/>
            <person name="Felis G.E."/>
            <person name="Knijff E."/>
            <person name="Girelli D."/>
            <person name="Castioni A."/>
            <person name="Dellaglio F."/>
        </authorList>
    </citation>
    <scope>NUCLEOTIDE SEQUENCE [GENOMIC DNA]</scope>
    <source>
        <strain>ATCC 19434 / DSM 20477 / JCM 5804 / LMG 11423 / NBRC 100485 / NCTC 7171 / WDCM 00010</strain>
    </source>
</reference>
<protein>
    <recommendedName>
        <fullName evidence="1">Protein RecA</fullName>
    </recommendedName>
    <alternativeName>
        <fullName evidence="1">Recombinase A</fullName>
    </alternativeName>
</protein>